<protein>
    <recommendedName>
        <fullName evidence="1">Fatty acid oxidation complex subunit alpha</fullName>
    </recommendedName>
    <domain>
        <recommendedName>
            <fullName evidence="1">Enoyl-CoA hydratase/Delta(3)-cis-Delta(2)-trans-enoyl-CoA isomerase/3-hydroxybutyryl-CoA epimerase</fullName>
            <ecNumber evidence="1">4.2.1.17</ecNumber>
            <ecNumber evidence="1">5.1.2.3</ecNumber>
            <ecNumber evidence="1">5.3.3.8</ecNumber>
        </recommendedName>
    </domain>
    <domain>
        <recommendedName>
            <fullName evidence="1">3-hydroxyacyl-CoA dehydrogenase</fullName>
            <ecNumber evidence="1">1.1.1.35</ecNumber>
        </recommendedName>
    </domain>
</protein>
<organism>
    <name type="scientific">Pseudomonas syringae pv. syringae (strain B728a)</name>
    <dbReference type="NCBI Taxonomy" id="205918"/>
    <lineage>
        <taxon>Bacteria</taxon>
        <taxon>Pseudomonadati</taxon>
        <taxon>Pseudomonadota</taxon>
        <taxon>Gammaproteobacteria</taxon>
        <taxon>Pseudomonadales</taxon>
        <taxon>Pseudomonadaceae</taxon>
        <taxon>Pseudomonas</taxon>
        <taxon>Pseudomonas syringae</taxon>
    </lineage>
</organism>
<evidence type="ECO:0000255" key="1">
    <source>
        <dbReference type="HAMAP-Rule" id="MF_01621"/>
    </source>
</evidence>
<accession>Q4ZRA0</accession>
<name>FADB_PSEU2</name>
<proteinExistence type="inferred from homology"/>
<comment type="function">
    <text evidence="1">Involved in the aerobic and anaerobic degradation of long-chain fatty acids via beta-oxidation cycle. Catalyzes the formation of 3-oxoacyl-CoA from enoyl-CoA via L-3-hydroxyacyl-CoA. It can also use D-3-hydroxyacyl-CoA and cis-3-enoyl-CoA as substrate.</text>
</comment>
<comment type="catalytic activity">
    <reaction evidence="1">
        <text>a (3S)-3-hydroxyacyl-CoA + NAD(+) = a 3-oxoacyl-CoA + NADH + H(+)</text>
        <dbReference type="Rhea" id="RHEA:22432"/>
        <dbReference type="ChEBI" id="CHEBI:15378"/>
        <dbReference type="ChEBI" id="CHEBI:57318"/>
        <dbReference type="ChEBI" id="CHEBI:57540"/>
        <dbReference type="ChEBI" id="CHEBI:57945"/>
        <dbReference type="ChEBI" id="CHEBI:90726"/>
        <dbReference type="EC" id="1.1.1.35"/>
    </reaction>
</comment>
<comment type="catalytic activity">
    <reaction evidence="1">
        <text>a (3S)-3-hydroxyacyl-CoA = a (2E)-enoyl-CoA + H2O</text>
        <dbReference type="Rhea" id="RHEA:16105"/>
        <dbReference type="ChEBI" id="CHEBI:15377"/>
        <dbReference type="ChEBI" id="CHEBI:57318"/>
        <dbReference type="ChEBI" id="CHEBI:58856"/>
        <dbReference type="EC" id="4.2.1.17"/>
    </reaction>
</comment>
<comment type="catalytic activity">
    <reaction evidence="1">
        <text>a 4-saturated-(3S)-3-hydroxyacyl-CoA = a (3E)-enoyl-CoA + H2O</text>
        <dbReference type="Rhea" id="RHEA:20724"/>
        <dbReference type="ChEBI" id="CHEBI:15377"/>
        <dbReference type="ChEBI" id="CHEBI:58521"/>
        <dbReference type="ChEBI" id="CHEBI:137480"/>
        <dbReference type="EC" id="4.2.1.17"/>
    </reaction>
</comment>
<comment type="catalytic activity">
    <reaction evidence="1">
        <text>(3S)-3-hydroxybutanoyl-CoA = (3R)-3-hydroxybutanoyl-CoA</text>
        <dbReference type="Rhea" id="RHEA:21760"/>
        <dbReference type="ChEBI" id="CHEBI:57315"/>
        <dbReference type="ChEBI" id="CHEBI:57316"/>
        <dbReference type="EC" id="5.1.2.3"/>
    </reaction>
</comment>
<comment type="catalytic activity">
    <reaction evidence="1">
        <text>a (3Z)-enoyl-CoA = a 4-saturated (2E)-enoyl-CoA</text>
        <dbReference type="Rhea" id="RHEA:45900"/>
        <dbReference type="ChEBI" id="CHEBI:85097"/>
        <dbReference type="ChEBI" id="CHEBI:85489"/>
        <dbReference type="EC" id="5.3.3.8"/>
    </reaction>
</comment>
<comment type="catalytic activity">
    <reaction evidence="1">
        <text>a (3E)-enoyl-CoA = a 4-saturated (2E)-enoyl-CoA</text>
        <dbReference type="Rhea" id="RHEA:45228"/>
        <dbReference type="ChEBI" id="CHEBI:58521"/>
        <dbReference type="ChEBI" id="CHEBI:85097"/>
        <dbReference type="EC" id="5.3.3.8"/>
    </reaction>
</comment>
<comment type="pathway">
    <text evidence="1">Lipid metabolism; fatty acid beta-oxidation.</text>
</comment>
<comment type="subunit">
    <text evidence="1">Heterotetramer of two alpha chains (FadB) and two beta chains (FadA).</text>
</comment>
<comment type="similarity">
    <text evidence="1">In the N-terminal section; belongs to the enoyl-CoA hydratase/isomerase family.</text>
</comment>
<comment type="similarity">
    <text evidence="1">In the C-terminal section; belongs to the 3-hydroxyacyl-CoA dehydrogenase family.</text>
</comment>
<dbReference type="EC" id="4.2.1.17" evidence="1"/>
<dbReference type="EC" id="5.1.2.3" evidence="1"/>
<dbReference type="EC" id="5.3.3.8" evidence="1"/>
<dbReference type="EC" id="1.1.1.35" evidence="1"/>
<dbReference type="EMBL" id="CP000075">
    <property type="protein sequence ID" value="AAY38322.1"/>
    <property type="molecule type" value="Genomic_DNA"/>
</dbReference>
<dbReference type="RefSeq" id="WP_011268335.1">
    <property type="nucleotide sequence ID" value="NC_007005.1"/>
</dbReference>
<dbReference type="RefSeq" id="YP_236360.1">
    <property type="nucleotide sequence ID" value="NC_007005.1"/>
</dbReference>
<dbReference type="SMR" id="Q4ZRA0"/>
<dbReference type="STRING" id="205918.Psyr_3290"/>
<dbReference type="KEGG" id="psb:Psyr_3290"/>
<dbReference type="PATRIC" id="fig|205918.7.peg.3364"/>
<dbReference type="eggNOG" id="COG1024">
    <property type="taxonomic scope" value="Bacteria"/>
</dbReference>
<dbReference type="eggNOG" id="COG1250">
    <property type="taxonomic scope" value="Bacteria"/>
</dbReference>
<dbReference type="HOGENOM" id="CLU_009834_16_3_6"/>
<dbReference type="OrthoDB" id="5389341at2"/>
<dbReference type="UniPathway" id="UPA00659"/>
<dbReference type="Proteomes" id="UP000000426">
    <property type="component" value="Chromosome"/>
</dbReference>
<dbReference type="GO" id="GO:0036125">
    <property type="term" value="C:fatty acid beta-oxidation multienzyme complex"/>
    <property type="evidence" value="ECO:0007669"/>
    <property type="project" value="InterPro"/>
</dbReference>
<dbReference type="GO" id="GO:0008692">
    <property type="term" value="F:3-hydroxybutyryl-CoA epimerase activity"/>
    <property type="evidence" value="ECO:0007669"/>
    <property type="project" value="UniProtKB-UniRule"/>
</dbReference>
<dbReference type="GO" id="GO:0004165">
    <property type="term" value="F:delta(3)-delta(2)-enoyl-CoA isomerase activity"/>
    <property type="evidence" value="ECO:0007669"/>
    <property type="project" value="UniProtKB-UniRule"/>
</dbReference>
<dbReference type="GO" id="GO:0004300">
    <property type="term" value="F:enoyl-CoA hydratase activity"/>
    <property type="evidence" value="ECO:0007669"/>
    <property type="project" value="UniProtKB-UniRule"/>
</dbReference>
<dbReference type="GO" id="GO:0016509">
    <property type="term" value="F:long-chain-3-hydroxyacyl-CoA dehydrogenase activity"/>
    <property type="evidence" value="ECO:0007669"/>
    <property type="project" value="TreeGrafter"/>
</dbReference>
<dbReference type="GO" id="GO:0070403">
    <property type="term" value="F:NAD+ binding"/>
    <property type="evidence" value="ECO:0007669"/>
    <property type="project" value="InterPro"/>
</dbReference>
<dbReference type="GO" id="GO:0006635">
    <property type="term" value="P:fatty acid beta-oxidation"/>
    <property type="evidence" value="ECO:0007669"/>
    <property type="project" value="UniProtKB-UniRule"/>
</dbReference>
<dbReference type="CDD" id="cd06558">
    <property type="entry name" value="crotonase-like"/>
    <property type="match status" value="1"/>
</dbReference>
<dbReference type="FunFam" id="1.10.1040.50:FF:000001">
    <property type="entry name" value="Fatty acid oxidation complex subunit alpha"/>
    <property type="match status" value="1"/>
</dbReference>
<dbReference type="FunFam" id="3.90.226.10:FF:000018">
    <property type="entry name" value="Fatty acid oxidation complex subunit alpha"/>
    <property type="match status" value="1"/>
</dbReference>
<dbReference type="FunFam" id="3.40.50.720:FF:000009">
    <property type="entry name" value="Fatty oxidation complex, alpha subunit"/>
    <property type="match status" value="1"/>
</dbReference>
<dbReference type="Gene3D" id="1.10.1040.50">
    <property type="match status" value="1"/>
</dbReference>
<dbReference type="Gene3D" id="3.90.226.10">
    <property type="entry name" value="2-enoyl-CoA Hydratase, Chain A, domain 1"/>
    <property type="match status" value="1"/>
</dbReference>
<dbReference type="Gene3D" id="3.40.50.720">
    <property type="entry name" value="NAD(P)-binding Rossmann-like Domain"/>
    <property type="match status" value="1"/>
</dbReference>
<dbReference type="HAMAP" id="MF_01621">
    <property type="entry name" value="FadB"/>
    <property type="match status" value="1"/>
</dbReference>
<dbReference type="InterPro" id="IPR006180">
    <property type="entry name" value="3-OHacyl-CoA_DH_CS"/>
</dbReference>
<dbReference type="InterPro" id="IPR006176">
    <property type="entry name" value="3-OHacyl-CoA_DH_NAD-bd"/>
</dbReference>
<dbReference type="InterPro" id="IPR006108">
    <property type="entry name" value="3HC_DH_C"/>
</dbReference>
<dbReference type="InterPro" id="IPR008927">
    <property type="entry name" value="6-PGluconate_DH-like_C_sf"/>
</dbReference>
<dbReference type="InterPro" id="IPR029045">
    <property type="entry name" value="ClpP/crotonase-like_dom_sf"/>
</dbReference>
<dbReference type="InterPro" id="IPR001753">
    <property type="entry name" value="Enoyl-CoA_hydra/iso"/>
</dbReference>
<dbReference type="InterPro" id="IPR050136">
    <property type="entry name" value="FA_oxidation_alpha_subunit"/>
</dbReference>
<dbReference type="InterPro" id="IPR012799">
    <property type="entry name" value="FadB"/>
</dbReference>
<dbReference type="InterPro" id="IPR036291">
    <property type="entry name" value="NAD(P)-bd_dom_sf"/>
</dbReference>
<dbReference type="NCBIfam" id="TIGR02437">
    <property type="entry name" value="FadB"/>
    <property type="match status" value="1"/>
</dbReference>
<dbReference type="NCBIfam" id="NF008727">
    <property type="entry name" value="PRK11730.1"/>
    <property type="match status" value="1"/>
</dbReference>
<dbReference type="PANTHER" id="PTHR43612">
    <property type="entry name" value="TRIFUNCTIONAL ENZYME SUBUNIT ALPHA"/>
    <property type="match status" value="1"/>
</dbReference>
<dbReference type="PANTHER" id="PTHR43612:SF3">
    <property type="entry name" value="TRIFUNCTIONAL ENZYME SUBUNIT ALPHA, MITOCHONDRIAL"/>
    <property type="match status" value="1"/>
</dbReference>
<dbReference type="Pfam" id="PF00725">
    <property type="entry name" value="3HCDH"/>
    <property type="match status" value="1"/>
</dbReference>
<dbReference type="Pfam" id="PF02737">
    <property type="entry name" value="3HCDH_N"/>
    <property type="match status" value="1"/>
</dbReference>
<dbReference type="Pfam" id="PF00378">
    <property type="entry name" value="ECH_1"/>
    <property type="match status" value="1"/>
</dbReference>
<dbReference type="SUPFAM" id="SSF48179">
    <property type="entry name" value="6-phosphogluconate dehydrogenase C-terminal domain-like"/>
    <property type="match status" value="2"/>
</dbReference>
<dbReference type="SUPFAM" id="SSF52096">
    <property type="entry name" value="ClpP/crotonase"/>
    <property type="match status" value="1"/>
</dbReference>
<dbReference type="SUPFAM" id="SSF51735">
    <property type="entry name" value="NAD(P)-binding Rossmann-fold domains"/>
    <property type="match status" value="1"/>
</dbReference>
<dbReference type="PROSITE" id="PS00067">
    <property type="entry name" value="3HCDH"/>
    <property type="match status" value="1"/>
</dbReference>
<feature type="chain" id="PRO_0000109281" description="Fatty acid oxidation complex subunit alpha">
    <location>
        <begin position="1"/>
        <end position="721"/>
    </location>
</feature>
<feature type="region of interest" description="Enoyl-CoA hydratase/isomerase" evidence="1">
    <location>
        <begin position="1"/>
        <end position="190"/>
    </location>
</feature>
<feature type="region of interest" description="3-hydroxyacyl-CoA dehydrogenase" evidence="1">
    <location>
        <begin position="312"/>
        <end position="721"/>
    </location>
</feature>
<feature type="active site" description="For 3-hydroxyacyl-CoA dehydrogenase activity" evidence="1">
    <location>
        <position position="451"/>
    </location>
</feature>
<feature type="binding site" evidence="1">
    <location>
        <position position="297"/>
    </location>
    <ligand>
        <name>substrate</name>
    </ligand>
</feature>
<feature type="binding site" evidence="1">
    <location>
        <position position="325"/>
    </location>
    <ligand>
        <name>NAD(+)</name>
        <dbReference type="ChEBI" id="CHEBI:57540"/>
    </ligand>
</feature>
<feature type="binding site" evidence="1">
    <location>
        <position position="344"/>
    </location>
    <ligand>
        <name>NAD(+)</name>
        <dbReference type="ChEBI" id="CHEBI:57540"/>
    </ligand>
</feature>
<feature type="binding site" evidence="1">
    <location>
        <begin position="401"/>
        <end position="403"/>
    </location>
    <ligand>
        <name>NAD(+)</name>
        <dbReference type="ChEBI" id="CHEBI:57540"/>
    </ligand>
</feature>
<feature type="binding site" evidence="1">
    <location>
        <position position="408"/>
    </location>
    <ligand>
        <name>NAD(+)</name>
        <dbReference type="ChEBI" id="CHEBI:57540"/>
    </ligand>
</feature>
<feature type="binding site" evidence="1">
    <location>
        <position position="430"/>
    </location>
    <ligand>
        <name>NAD(+)</name>
        <dbReference type="ChEBI" id="CHEBI:57540"/>
    </ligand>
</feature>
<feature type="binding site" evidence="1">
    <location>
        <position position="454"/>
    </location>
    <ligand>
        <name>NAD(+)</name>
        <dbReference type="ChEBI" id="CHEBI:57540"/>
    </ligand>
</feature>
<feature type="binding site" evidence="1">
    <location>
        <position position="501"/>
    </location>
    <ligand>
        <name>substrate</name>
    </ligand>
</feature>
<feature type="binding site" evidence="1">
    <location>
        <position position="660"/>
    </location>
    <ligand>
        <name>substrate</name>
    </ligand>
</feature>
<feature type="site" description="Important for catalytic activity" evidence="1">
    <location>
        <position position="120"/>
    </location>
</feature>
<feature type="site" description="Important for catalytic activity" evidence="1">
    <location>
        <position position="140"/>
    </location>
</feature>
<sequence>MIYEGKAITVKALESGIVELNFDLKGESVNKFNRLTLNEFRQAVDAVKADASVKGVIVTSGKDSFIVGADITEFVDNFKLPEAELVAGNLEANRIFSDFEDLNVPTVVAINGIALGGGLEMCLAADYRVMASSARIGLPEVKLGLYPGFGGTVRLPRIIGADNAIEWIASGKENAAEDALKVGAVDAVVAPEKLQAAALDLIQRAISGEFDYKAKRQPKLDKLKLNAIEQMMAFETAKGFVAGQAGPNYPAPVEAIKTIQKAANFGRDKALEIEAAGFVKMAKTPAAQSLIGLFLNDQELKKKARGYDKIAKDVKQAAVLGAGIMGGGIAYQSAVKGTPILMKDIREEAIQLGLNEASKLLGGRLEKGRLTAAKMAEALNAIRPTLSYGDFGNVDLVVEAVVENPKVKQAVLAEVEANVGENTILASNTSTISISLLAQALKRPENFVGMHFFNPVHMMPLVEVIRGEKSSEEAVATTVAYAKKMGKNPIVVNDCPGFLVNRVLFPYFGGFARLVSAGVDFVRIDKVMEKFGWPMGPAYLMDVVGIDTGHHGRDVMAEGFPDRMKDDRRSAIDALYDAKRLGQKNGKGFYAYETDKKGKPKKVNDPAVLDVLKPIVYEQREVSDEDIVNWMMIPLCLETVRCLEDGIVETAAEADMGLIYGIGFPPFRGGALRYIDSIGVAEFVALADQYAELGALYQPTAKLREMAANGQSFFGQASSEE</sequence>
<keyword id="KW-0276">Fatty acid metabolism</keyword>
<keyword id="KW-0413">Isomerase</keyword>
<keyword id="KW-0442">Lipid degradation</keyword>
<keyword id="KW-0443">Lipid metabolism</keyword>
<keyword id="KW-0456">Lyase</keyword>
<keyword id="KW-0511">Multifunctional enzyme</keyword>
<keyword id="KW-0520">NAD</keyword>
<keyword id="KW-0560">Oxidoreductase</keyword>
<reference key="1">
    <citation type="journal article" date="2005" name="Proc. Natl. Acad. Sci. U.S.A.">
        <title>Comparison of the complete genome sequences of Pseudomonas syringae pv. syringae B728a and pv. tomato DC3000.</title>
        <authorList>
            <person name="Feil H."/>
            <person name="Feil W.S."/>
            <person name="Chain P."/>
            <person name="Larimer F."/>
            <person name="Dibartolo G."/>
            <person name="Copeland A."/>
            <person name="Lykidis A."/>
            <person name="Trong S."/>
            <person name="Nolan M."/>
            <person name="Goltsman E."/>
            <person name="Thiel J."/>
            <person name="Malfatti S."/>
            <person name="Loper J.E."/>
            <person name="Lapidus A."/>
            <person name="Detter J.C."/>
            <person name="Land M."/>
            <person name="Richardson P.M."/>
            <person name="Kyrpides N.C."/>
            <person name="Ivanova N."/>
            <person name="Lindow S.E."/>
        </authorList>
    </citation>
    <scope>NUCLEOTIDE SEQUENCE [LARGE SCALE GENOMIC DNA]</scope>
    <source>
        <strain>B728a</strain>
    </source>
</reference>
<gene>
    <name evidence="1" type="primary">fadB</name>
    <name type="ordered locus">Psyr_3290</name>
</gene>